<accession>Q0I1D6</accession>
<comment type="function">
    <text evidence="1">Catalyzes the initial step of the lipid cycle reactions in the biosynthesis of the cell wall peptidoglycan: transfers peptidoglycan precursor phospho-MurNAc-pentapeptide from UDP-MurNAc-pentapeptide onto the lipid carrier undecaprenyl phosphate, yielding undecaprenyl-pyrophosphoryl-MurNAc-pentapeptide, known as lipid I.</text>
</comment>
<comment type="catalytic activity">
    <reaction evidence="1">
        <text>UDP-N-acetyl-alpha-D-muramoyl-L-alanyl-gamma-D-glutamyl-meso-2,6-diaminopimeloyl-D-alanyl-D-alanine + di-trans,octa-cis-undecaprenyl phosphate = di-trans,octa-cis-undecaprenyl diphospho-N-acetyl-alpha-D-muramoyl-L-alanyl-D-glutamyl-meso-2,6-diaminopimeloyl-D-alanyl-D-alanine + UMP</text>
        <dbReference type="Rhea" id="RHEA:28386"/>
        <dbReference type="ChEBI" id="CHEBI:57865"/>
        <dbReference type="ChEBI" id="CHEBI:60392"/>
        <dbReference type="ChEBI" id="CHEBI:61386"/>
        <dbReference type="ChEBI" id="CHEBI:61387"/>
        <dbReference type="EC" id="2.7.8.13"/>
    </reaction>
</comment>
<comment type="cofactor">
    <cofactor evidence="1">
        <name>Mg(2+)</name>
        <dbReference type="ChEBI" id="CHEBI:18420"/>
    </cofactor>
</comment>
<comment type="pathway">
    <text evidence="1">Cell wall biogenesis; peptidoglycan biosynthesis.</text>
</comment>
<comment type="subcellular location">
    <subcellularLocation>
        <location evidence="1">Cell inner membrane</location>
        <topology evidence="1">Multi-pass membrane protein</topology>
    </subcellularLocation>
</comment>
<comment type="similarity">
    <text evidence="1">Belongs to the glycosyltransferase 4 family. MraY subfamily.</text>
</comment>
<name>MRAY_HISS1</name>
<keyword id="KW-0131">Cell cycle</keyword>
<keyword id="KW-0132">Cell division</keyword>
<keyword id="KW-0997">Cell inner membrane</keyword>
<keyword id="KW-1003">Cell membrane</keyword>
<keyword id="KW-0133">Cell shape</keyword>
<keyword id="KW-0961">Cell wall biogenesis/degradation</keyword>
<keyword id="KW-0460">Magnesium</keyword>
<keyword id="KW-0472">Membrane</keyword>
<keyword id="KW-0479">Metal-binding</keyword>
<keyword id="KW-0573">Peptidoglycan synthesis</keyword>
<keyword id="KW-0808">Transferase</keyword>
<keyword id="KW-0812">Transmembrane</keyword>
<keyword id="KW-1133">Transmembrane helix</keyword>
<organism>
    <name type="scientific">Histophilus somni (strain 129Pt)</name>
    <name type="common">Haemophilus somnus</name>
    <dbReference type="NCBI Taxonomy" id="205914"/>
    <lineage>
        <taxon>Bacteria</taxon>
        <taxon>Pseudomonadati</taxon>
        <taxon>Pseudomonadota</taxon>
        <taxon>Gammaproteobacteria</taxon>
        <taxon>Pasteurellales</taxon>
        <taxon>Pasteurellaceae</taxon>
        <taxon>Histophilus</taxon>
    </lineage>
</organism>
<dbReference type="EC" id="2.7.8.13" evidence="1"/>
<dbReference type="EMBL" id="CP000436">
    <property type="protein sequence ID" value="ABI24633.1"/>
    <property type="molecule type" value="Genomic_DNA"/>
</dbReference>
<dbReference type="SMR" id="Q0I1D6"/>
<dbReference type="KEGG" id="hso:HS_0355"/>
<dbReference type="eggNOG" id="COG0472">
    <property type="taxonomic scope" value="Bacteria"/>
</dbReference>
<dbReference type="HOGENOM" id="CLU_023982_0_0_6"/>
<dbReference type="UniPathway" id="UPA00219"/>
<dbReference type="GO" id="GO:0005886">
    <property type="term" value="C:plasma membrane"/>
    <property type="evidence" value="ECO:0007669"/>
    <property type="project" value="UniProtKB-SubCell"/>
</dbReference>
<dbReference type="GO" id="GO:0046872">
    <property type="term" value="F:metal ion binding"/>
    <property type="evidence" value="ECO:0007669"/>
    <property type="project" value="UniProtKB-KW"/>
</dbReference>
<dbReference type="GO" id="GO:0008963">
    <property type="term" value="F:phospho-N-acetylmuramoyl-pentapeptide-transferase activity"/>
    <property type="evidence" value="ECO:0007669"/>
    <property type="project" value="UniProtKB-UniRule"/>
</dbReference>
<dbReference type="GO" id="GO:0051992">
    <property type="term" value="F:UDP-N-acetylmuramoyl-L-alanyl-D-glutamyl-meso-2,6-diaminopimelyl-D-alanyl-D-alanine:undecaprenyl-phosphate transferase activity"/>
    <property type="evidence" value="ECO:0007669"/>
    <property type="project" value="RHEA"/>
</dbReference>
<dbReference type="GO" id="GO:0051301">
    <property type="term" value="P:cell division"/>
    <property type="evidence" value="ECO:0007669"/>
    <property type="project" value="UniProtKB-KW"/>
</dbReference>
<dbReference type="GO" id="GO:0071555">
    <property type="term" value="P:cell wall organization"/>
    <property type="evidence" value="ECO:0007669"/>
    <property type="project" value="UniProtKB-KW"/>
</dbReference>
<dbReference type="GO" id="GO:0009252">
    <property type="term" value="P:peptidoglycan biosynthetic process"/>
    <property type="evidence" value="ECO:0007669"/>
    <property type="project" value="UniProtKB-UniRule"/>
</dbReference>
<dbReference type="GO" id="GO:0008360">
    <property type="term" value="P:regulation of cell shape"/>
    <property type="evidence" value="ECO:0007669"/>
    <property type="project" value="UniProtKB-KW"/>
</dbReference>
<dbReference type="CDD" id="cd06852">
    <property type="entry name" value="GT_MraY"/>
    <property type="match status" value="1"/>
</dbReference>
<dbReference type="HAMAP" id="MF_00038">
    <property type="entry name" value="MraY"/>
    <property type="match status" value="1"/>
</dbReference>
<dbReference type="InterPro" id="IPR000715">
    <property type="entry name" value="Glycosyl_transferase_4"/>
</dbReference>
<dbReference type="InterPro" id="IPR003524">
    <property type="entry name" value="PNAcMuramoyl-5peptid_Trfase"/>
</dbReference>
<dbReference type="InterPro" id="IPR018480">
    <property type="entry name" value="PNAcMuramoyl-5peptid_Trfase_CS"/>
</dbReference>
<dbReference type="NCBIfam" id="TIGR00445">
    <property type="entry name" value="mraY"/>
    <property type="match status" value="1"/>
</dbReference>
<dbReference type="PANTHER" id="PTHR22926">
    <property type="entry name" value="PHOSPHO-N-ACETYLMURAMOYL-PENTAPEPTIDE-TRANSFERASE"/>
    <property type="match status" value="1"/>
</dbReference>
<dbReference type="PANTHER" id="PTHR22926:SF5">
    <property type="entry name" value="PHOSPHO-N-ACETYLMURAMOYL-PENTAPEPTIDE-TRANSFERASE HOMOLOG"/>
    <property type="match status" value="1"/>
</dbReference>
<dbReference type="Pfam" id="PF00953">
    <property type="entry name" value="Glycos_transf_4"/>
    <property type="match status" value="1"/>
</dbReference>
<dbReference type="Pfam" id="PF10555">
    <property type="entry name" value="MraY_sig1"/>
    <property type="match status" value="1"/>
</dbReference>
<dbReference type="PROSITE" id="PS01347">
    <property type="entry name" value="MRAY_1"/>
    <property type="match status" value="1"/>
</dbReference>
<dbReference type="PROSITE" id="PS01348">
    <property type="entry name" value="MRAY_2"/>
    <property type="match status" value="1"/>
</dbReference>
<reference key="1">
    <citation type="journal article" date="2007" name="J. Bacteriol.">
        <title>Complete genome sequence of Haemophilus somnus (Histophilus somni) strain 129Pt and comparison to Haemophilus ducreyi 35000HP and Haemophilus influenzae Rd.</title>
        <authorList>
            <person name="Challacombe J.F."/>
            <person name="Duncan A.J."/>
            <person name="Brettin T.S."/>
            <person name="Bruce D."/>
            <person name="Chertkov O."/>
            <person name="Detter J.C."/>
            <person name="Han C.S."/>
            <person name="Misra M."/>
            <person name="Richardson P."/>
            <person name="Tapia R."/>
            <person name="Thayer N."/>
            <person name="Xie G."/>
            <person name="Inzana T.J."/>
        </authorList>
    </citation>
    <scope>NUCLEOTIDE SEQUENCE [LARGE SCALE GENOMIC DNA]</scope>
    <source>
        <strain>129Pt</strain>
    </source>
</reference>
<gene>
    <name evidence="1" type="primary">mraY</name>
    <name type="ordered locus">HS_0355</name>
</gene>
<protein>
    <recommendedName>
        <fullName evidence="1">Phospho-N-acetylmuramoyl-pentapeptide-transferase</fullName>
        <ecNumber evidence="1">2.7.8.13</ecNumber>
    </recommendedName>
    <alternativeName>
        <fullName evidence="1">UDP-MurNAc-pentapeptide phosphotransferase</fullName>
    </alternativeName>
</protein>
<feature type="chain" id="PRO_1000002986" description="Phospho-N-acetylmuramoyl-pentapeptide-transferase">
    <location>
        <begin position="1"/>
        <end position="361"/>
    </location>
</feature>
<feature type="transmembrane region" description="Helical" evidence="1">
    <location>
        <begin position="21"/>
        <end position="41"/>
    </location>
</feature>
<feature type="transmembrane region" description="Helical" evidence="1">
    <location>
        <begin position="74"/>
        <end position="94"/>
    </location>
</feature>
<feature type="transmembrane region" description="Helical" evidence="1">
    <location>
        <begin position="97"/>
        <end position="117"/>
    </location>
</feature>
<feature type="transmembrane region" description="Helical" evidence="1">
    <location>
        <begin position="132"/>
        <end position="152"/>
    </location>
</feature>
<feature type="transmembrane region" description="Helical" evidence="1">
    <location>
        <begin position="168"/>
        <end position="188"/>
    </location>
</feature>
<feature type="transmembrane region" description="Helical" evidence="1">
    <location>
        <begin position="199"/>
        <end position="219"/>
    </location>
</feature>
<feature type="transmembrane region" description="Helical" evidence="1">
    <location>
        <begin position="239"/>
        <end position="259"/>
    </location>
</feature>
<feature type="transmembrane region" description="Helical" evidence="1">
    <location>
        <begin position="264"/>
        <end position="284"/>
    </location>
</feature>
<feature type="transmembrane region" description="Helical" evidence="1">
    <location>
        <begin position="288"/>
        <end position="308"/>
    </location>
</feature>
<feature type="transmembrane region" description="Helical" evidence="1">
    <location>
        <begin position="339"/>
        <end position="359"/>
    </location>
</feature>
<proteinExistence type="inferred from homology"/>
<sequence length="361" mass="40424">MLVWLAEYLHQYQSVFNVFSYLTVRAILALFTALLLSLWIGPKVIRRLQILKFGQEIRNDGPDSHLSKKGTPTMGGIMILFAIGVSTLLWANLANPYVWFCLFVLFGYGAVGFVDDYRKITRKNTAGLVARWKYFWLSVIALISAFGMYAIGKDTDATRLVVPFFKDVMPQLGLFYIVLAYFVIVGTGNAVNLTDGLDGLAIMPTVFVAAAFALIAWATGNIEWSKYLYIPYIKHTSELVIFCTAIVGAGLGFLWFNTYPAQLFMGDVGSLALGGVLGTIAVLVRQEFLLVIMGGVFVVETLSVILQVGSYKLRNGKRIFRMAPIHHHYELKGWPEPRVIIRFWIISLMLVLLGLITLKLR</sequence>
<evidence type="ECO:0000255" key="1">
    <source>
        <dbReference type="HAMAP-Rule" id="MF_00038"/>
    </source>
</evidence>